<organism>
    <name type="scientific">Methanothermobacter thermautotrophicus (strain ATCC 29096 / DSM 1053 / JCM 10044 / NBRC 100330 / Delta H)</name>
    <name type="common">Methanobacterium thermoautotrophicum</name>
    <dbReference type="NCBI Taxonomy" id="187420"/>
    <lineage>
        <taxon>Archaea</taxon>
        <taxon>Methanobacteriati</taxon>
        <taxon>Methanobacteriota</taxon>
        <taxon>Methanomada group</taxon>
        <taxon>Methanobacteria</taxon>
        <taxon>Methanobacteriales</taxon>
        <taxon>Methanobacteriaceae</taxon>
        <taxon>Methanothermobacter</taxon>
    </lineage>
</organism>
<evidence type="ECO:0000255" key="1">
    <source>
        <dbReference type="HAMAP-Rule" id="MF_01447"/>
    </source>
</evidence>
<proteinExistence type="inferred from homology"/>
<accession>O27476</accession>
<comment type="function">
    <text evidence="1">Required for the formation of a threonylcarbamoyl group on adenosine at position 37 (t(6)A37) in tRNAs that read codons beginning with adenine. Is a component of the KEOPS complex that is probably involved in the transfer of the threonylcarbamoyl moiety of threonylcarbamoyl-AMP (TC-AMP) to the N6 group of A37. The Kae1 domain likely plays a direct catalytic role in this reaction. The Bud32 domain probably displays kinase activity that regulates Kae1 function.</text>
</comment>
<comment type="catalytic activity">
    <reaction evidence="1">
        <text>L-seryl-[protein] + ATP = O-phospho-L-seryl-[protein] + ADP + H(+)</text>
        <dbReference type="Rhea" id="RHEA:17989"/>
        <dbReference type="Rhea" id="RHEA-COMP:9863"/>
        <dbReference type="Rhea" id="RHEA-COMP:11604"/>
        <dbReference type="ChEBI" id="CHEBI:15378"/>
        <dbReference type="ChEBI" id="CHEBI:29999"/>
        <dbReference type="ChEBI" id="CHEBI:30616"/>
        <dbReference type="ChEBI" id="CHEBI:83421"/>
        <dbReference type="ChEBI" id="CHEBI:456216"/>
        <dbReference type="EC" id="2.7.11.1"/>
    </reaction>
</comment>
<comment type="catalytic activity">
    <reaction evidence="1">
        <text>L-threonyl-[protein] + ATP = O-phospho-L-threonyl-[protein] + ADP + H(+)</text>
        <dbReference type="Rhea" id="RHEA:46608"/>
        <dbReference type="Rhea" id="RHEA-COMP:11060"/>
        <dbReference type="Rhea" id="RHEA-COMP:11605"/>
        <dbReference type="ChEBI" id="CHEBI:15378"/>
        <dbReference type="ChEBI" id="CHEBI:30013"/>
        <dbReference type="ChEBI" id="CHEBI:30616"/>
        <dbReference type="ChEBI" id="CHEBI:61977"/>
        <dbReference type="ChEBI" id="CHEBI:456216"/>
        <dbReference type="EC" id="2.7.11.1"/>
    </reaction>
</comment>
<comment type="catalytic activity">
    <reaction evidence="1">
        <text>L-threonylcarbamoyladenylate + adenosine(37) in tRNA = N(6)-L-threonylcarbamoyladenosine(37) in tRNA + AMP + H(+)</text>
        <dbReference type="Rhea" id="RHEA:37059"/>
        <dbReference type="Rhea" id="RHEA-COMP:10162"/>
        <dbReference type="Rhea" id="RHEA-COMP:10163"/>
        <dbReference type="ChEBI" id="CHEBI:15378"/>
        <dbReference type="ChEBI" id="CHEBI:73682"/>
        <dbReference type="ChEBI" id="CHEBI:74411"/>
        <dbReference type="ChEBI" id="CHEBI:74418"/>
        <dbReference type="ChEBI" id="CHEBI:456215"/>
        <dbReference type="EC" id="2.3.1.234"/>
    </reaction>
</comment>
<comment type="cofactor">
    <cofactor evidence="1">
        <name>Fe(2+)</name>
        <dbReference type="ChEBI" id="CHEBI:29033"/>
    </cofactor>
    <text evidence="1">Binds 1 Fe(2+) ion per subunit.</text>
</comment>
<comment type="subunit">
    <text evidence="1">Component of the KEOPS complex that consists of Kae1, Bud32, Cgi121 and Pcc1; the whole complex dimerizes.</text>
</comment>
<comment type="subcellular location">
    <subcellularLocation>
        <location evidence="1">Cytoplasm</location>
    </subcellularLocation>
</comment>
<comment type="similarity">
    <text evidence="1">In the N-terminal section; belongs to the KAE1 / TsaD family.</text>
</comment>
<comment type="similarity">
    <text evidence="1">In the C-terminal section; belongs to the protein kinase superfamily. Tyr protein kinase family. BUD32 subfamily.</text>
</comment>
<dbReference type="EC" id="2.3.1.234" evidence="1"/>
<dbReference type="EC" id="2.7.11.1" evidence="1"/>
<dbReference type="EMBL" id="AE000666">
    <property type="protein sequence ID" value="AAB85902.1"/>
    <property type="molecule type" value="Genomic_DNA"/>
</dbReference>
<dbReference type="PIR" id="H69056">
    <property type="entry name" value="H69056"/>
</dbReference>
<dbReference type="RefSeq" id="WP_010877037.1">
    <property type="nucleotide sequence ID" value="NC_000916.1"/>
</dbReference>
<dbReference type="SMR" id="O27476"/>
<dbReference type="FunCoup" id="O27476">
    <property type="interactions" value="140"/>
</dbReference>
<dbReference type="STRING" id="187420.MTH_1425"/>
<dbReference type="PaxDb" id="187420-MTH_1425"/>
<dbReference type="EnsemblBacteria" id="AAB85902">
    <property type="protein sequence ID" value="AAB85902"/>
    <property type="gene ID" value="MTH_1425"/>
</dbReference>
<dbReference type="GeneID" id="1471142"/>
<dbReference type="KEGG" id="mth:MTH_1425"/>
<dbReference type="PATRIC" id="fig|187420.15.peg.1389"/>
<dbReference type="HOGENOM" id="CLU_023208_2_2_2"/>
<dbReference type="InParanoid" id="O27476"/>
<dbReference type="Proteomes" id="UP000005223">
    <property type="component" value="Chromosome"/>
</dbReference>
<dbReference type="GO" id="GO:0005737">
    <property type="term" value="C:cytoplasm"/>
    <property type="evidence" value="ECO:0007669"/>
    <property type="project" value="UniProtKB-SubCell"/>
</dbReference>
<dbReference type="GO" id="GO:0000408">
    <property type="term" value="C:EKC/KEOPS complex"/>
    <property type="evidence" value="ECO:0007669"/>
    <property type="project" value="InterPro"/>
</dbReference>
<dbReference type="GO" id="GO:0005524">
    <property type="term" value="F:ATP binding"/>
    <property type="evidence" value="ECO:0007669"/>
    <property type="project" value="UniProtKB-UniRule"/>
</dbReference>
<dbReference type="GO" id="GO:0005506">
    <property type="term" value="F:iron ion binding"/>
    <property type="evidence" value="ECO:0007669"/>
    <property type="project" value="UniProtKB-UniRule"/>
</dbReference>
<dbReference type="GO" id="GO:0004222">
    <property type="term" value="F:metalloendopeptidase activity"/>
    <property type="evidence" value="ECO:0007669"/>
    <property type="project" value="InterPro"/>
</dbReference>
<dbReference type="GO" id="GO:0061711">
    <property type="term" value="F:N(6)-L-threonylcarbamoyladenine synthase activity"/>
    <property type="evidence" value="ECO:0007669"/>
    <property type="project" value="UniProtKB-EC"/>
</dbReference>
<dbReference type="GO" id="GO:0106310">
    <property type="term" value="F:protein serine kinase activity"/>
    <property type="evidence" value="ECO:0007669"/>
    <property type="project" value="RHEA"/>
</dbReference>
<dbReference type="GO" id="GO:0004674">
    <property type="term" value="F:protein serine/threonine kinase activity"/>
    <property type="evidence" value="ECO:0007669"/>
    <property type="project" value="UniProtKB-KW"/>
</dbReference>
<dbReference type="GO" id="GO:0004712">
    <property type="term" value="F:protein serine/threonine/tyrosine kinase activity"/>
    <property type="evidence" value="ECO:0007669"/>
    <property type="project" value="UniProtKB-UniRule"/>
</dbReference>
<dbReference type="GO" id="GO:0008270">
    <property type="term" value="F:zinc ion binding"/>
    <property type="evidence" value="ECO:0007669"/>
    <property type="project" value="InterPro"/>
</dbReference>
<dbReference type="GO" id="GO:0002949">
    <property type="term" value="P:tRNA threonylcarbamoyladenosine modification"/>
    <property type="evidence" value="ECO:0007669"/>
    <property type="project" value="UniProtKB-UniRule"/>
</dbReference>
<dbReference type="CDD" id="cd24131">
    <property type="entry name" value="ASKHA_NBD_Kae1_arch_bac"/>
    <property type="match status" value="1"/>
</dbReference>
<dbReference type="FunFam" id="3.30.420.40:FF:000038">
    <property type="entry name" value="Probable tRNA N6-adenosine threonylcarbamoyltransferase"/>
    <property type="match status" value="1"/>
</dbReference>
<dbReference type="FunFam" id="3.30.200.20:FF:000201">
    <property type="entry name" value="TP53-regulating kinase isoform X1"/>
    <property type="match status" value="1"/>
</dbReference>
<dbReference type="Gene3D" id="3.30.420.40">
    <property type="match status" value="2"/>
</dbReference>
<dbReference type="Gene3D" id="3.30.200.20">
    <property type="entry name" value="Phosphorylase Kinase, domain 1"/>
    <property type="match status" value="1"/>
</dbReference>
<dbReference type="Gene3D" id="1.10.510.10">
    <property type="entry name" value="Transferase(Phosphotransferase) domain 1"/>
    <property type="match status" value="1"/>
</dbReference>
<dbReference type="HAMAP" id="MF_01446">
    <property type="entry name" value="Kae1"/>
    <property type="match status" value="1"/>
</dbReference>
<dbReference type="HAMAP" id="MF_01447">
    <property type="entry name" value="Kae1_Bud32_arch"/>
    <property type="match status" value="1"/>
</dbReference>
<dbReference type="InterPro" id="IPR043129">
    <property type="entry name" value="ATPase_NBD"/>
</dbReference>
<dbReference type="InterPro" id="IPR022495">
    <property type="entry name" value="Bud32"/>
</dbReference>
<dbReference type="InterPro" id="IPR000905">
    <property type="entry name" value="Gcp-like_dom"/>
</dbReference>
<dbReference type="InterPro" id="IPR017861">
    <property type="entry name" value="KAE1/TsaD"/>
</dbReference>
<dbReference type="InterPro" id="IPR034680">
    <property type="entry name" value="Kae1_archaea_euk"/>
</dbReference>
<dbReference type="InterPro" id="IPR011009">
    <property type="entry name" value="Kinase-like_dom_sf"/>
</dbReference>
<dbReference type="InterPro" id="IPR017860">
    <property type="entry name" value="Peptidase_M22_CS"/>
</dbReference>
<dbReference type="InterPro" id="IPR000719">
    <property type="entry name" value="Prot_kinase_dom"/>
</dbReference>
<dbReference type="InterPro" id="IPR018934">
    <property type="entry name" value="RIO_dom"/>
</dbReference>
<dbReference type="InterPro" id="IPR009220">
    <property type="entry name" value="tRNA_threonyl_synthase/kinase"/>
</dbReference>
<dbReference type="InterPro" id="IPR008266">
    <property type="entry name" value="Tyr_kinase_AS"/>
</dbReference>
<dbReference type="NCBIfam" id="TIGR03724">
    <property type="entry name" value="arch_bud32"/>
    <property type="match status" value="1"/>
</dbReference>
<dbReference type="NCBIfam" id="TIGR03722">
    <property type="entry name" value="arch_KAE1"/>
    <property type="match status" value="1"/>
</dbReference>
<dbReference type="NCBIfam" id="TIGR00329">
    <property type="entry name" value="gcp_kae1"/>
    <property type="match status" value="1"/>
</dbReference>
<dbReference type="NCBIfam" id="NF007174">
    <property type="entry name" value="PRK09605.1"/>
    <property type="match status" value="1"/>
</dbReference>
<dbReference type="NCBIfam" id="NF011463">
    <property type="entry name" value="PRK14879.1-4"/>
    <property type="match status" value="1"/>
</dbReference>
<dbReference type="PANTHER" id="PTHR11735">
    <property type="entry name" value="TRNA N6-ADENOSINE THREONYLCARBAMOYLTRANSFERASE"/>
    <property type="match status" value="1"/>
</dbReference>
<dbReference type="PANTHER" id="PTHR11735:SF14">
    <property type="entry name" value="TRNA N6-ADENOSINE THREONYLCARBAMOYLTRANSFERASE"/>
    <property type="match status" value="1"/>
</dbReference>
<dbReference type="Pfam" id="PF01163">
    <property type="entry name" value="RIO1"/>
    <property type="match status" value="1"/>
</dbReference>
<dbReference type="Pfam" id="PF00814">
    <property type="entry name" value="TsaD"/>
    <property type="match status" value="1"/>
</dbReference>
<dbReference type="PIRSF" id="PIRSF036401">
    <property type="entry name" value="Gcp_STYKS"/>
    <property type="match status" value="1"/>
</dbReference>
<dbReference type="PRINTS" id="PR00789">
    <property type="entry name" value="OSIALOPTASE"/>
</dbReference>
<dbReference type="SUPFAM" id="SSF53067">
    <property type="entry name" value="Actin-like ATPase domain"/>
    <property type="match status" value="1"/>
</dbReference>
<dbReference type="SUPFAM" id="SSF56112">
    <property type="entry name" value="Protein kinase-like (PK-like)"/>
    <property type="match status" value="1"/>
</dbReference>
<dbReference type="PROSITE" id="PS01016">
    <property type="entry name" value="GLYCOPROTEASE"/>
    <property type="match status" value="1"/>
</dbReference>
<dbReference type="PROSITE" id="PS50011">
    <property type="entry name" value="PROTEIN_KINASE_DOM"/>
    <property type="match status" value="1"/>
</dbReference>
<dbReference type="PROSITE" id="PS00109">
    <property type="entry name" value="PROTEIN_KINASE_TYR"/>
    <property type="match status" value="1"/>
</dbReference>
<name>KAE1B_METTH</name>
<keyword id="KW-0012">Acyltransferase</keyword>
<keyword id="KW-0067">ATP-binding</keyword>
<keyword id="KW-0963">Cytoplasm</keyword>
<keyword id="KW-0408">Iron</keyword>
<keyword id="KW-0418">Kinase</keyword>
<keyword id="KW-0479">Metal-binding</keyword>
<keyword id="KW-0511">Multifunctional enzyme</keyword>
<keyword id="KW-0547">Nucleotide-binding</keyword>
<keyword id="KW-1185">Reference proteome</keyword>
<keyword id="KW-0723">Serine/threonine-protein kinase</keyword>
<keyword id="KW-0808">Transferase</keyword>
<keyword id="KW-0819">tRNA processing</keyword>
<reference key="1">
    <citation type="journal article" date="1997" name="J. Bacteriol.">
        <title>Complete genome sequence of Methanobacterium thermoautotrophicum deltaH: functional analysis and comparative genomics.</title>
        <authorList>
            <person name="Smith D.R."/>
            <person name="Doucette-Stamm L.A."/>
            <person name="Deloughery C."/>
            <person name="Lee H.-M."/>
            <person name="Dubois J."/>
            <person name="Aldredge T."/>
            <person name="Bashirzadeh R."/>
            <person name="Blakely D."/>
            <person name="Cook R."/>
            <person name="Gilbert K."/>
            <person name="Harrison D."/>
            <person name="Hoang L."/>
            <person name="Keagle P."/>
            <person name="Lumm W."/>
            <person name="Pothier B."/>
            <person name="Qiu D."/>
            <person name="Spadafora R."/>
            <person name="Vicare R."/>
            <person name="Wang Y."/>
            <person name="Wierzbowski J."/>
            <person name="Gibson R."/>
            <person name="Jiwani N."/>
            <person name="Caruso A."/>
            <person name="Bush D."/>
            <person name="Safer H."/>
            <person name="Patwell D."/>
            <person name="Prabhakar S."/>
            <person name="McDougall S."/>
            <person name="Shimer G."/>
            <person name="Goyal A."/>
            <person name="Pietrovski S."/>
            <person name="Church G.M."/>
            <person name="Daniels C.J."/>
            <person name="Mao J.-I."/>
            <person name="Rice P."/>
            <person name="Noelling J."/>
            <person name="Reeve J.N."/>
        </authorList>
    </citation>
    <scope>NUCLEOTIDE SEQUENCE [LARGE SCALE GENOMIC DNA]</scope>
    <source>
        <strain>ATCC 29096 / DSM 1053 / JCM 10044 / NBRC 100330 / Delta H</strain>
    </source>
</reference>
<feature type="chain" id="PRO_0000096980" description="Probable bifunctional tRNA threonylcarbamoyladenosine biosynthesis protein">
    <location>
        <begin position="1"/>
        <end position="534"/>
    </location>
</feature>
<feature type="domain" description="Protein kinase" evidence="1">
    <location>
        <begin position="335"/>
        <end position="534"/>
    </location>
</feature>
<feature type="region of interest" description="Kae1">
    <location>
        <begin position="1"/>
        <end position="325"/>
    </location>
</feature>
<feature type="active site" description="Proton acceptor; for kinase activity" evidence="1">
    <location>
        <position position="451"/>
    </location>
</feature>
<feature type="binding site" evidence="1">
    <location>
        <position position="108"/>
    </location>
    <ligand>
        <name>Fe cation</name>
        <dbReference type="ChEBI" id="CHEBI:24875"/>
    </ligand>
</feature>
<feature type="binding site" evidence="1">
    <location>
        <position position="112"/>
    </location>
    <ligand>
        <name>Fe cation</name>
        <dbReference type="ChEBI" id="CHEBI:24875"/>
    </ligand>
</feature>
<feature type="binding site" evidence="1">
    <location>
        <begin position="129"/>
        <end position="133"/>
    </location>
    <ligand>
        <name>L-threonylcarbamoyladenylate</name>
        <dbReference type="ChEBI" id="CHEBI:73682"/>
    </ligand>
</feature>
<feature type="binding site" evidence="1">
    <location>
        <position position="129"/>
    </location>
    <ligand>
        <name>Fe cation</name>
        <dbReference type="ChEBI" id="CHEBI:24875"/>
    </ligand>
</feature>
<feature type="binding site" evidence="1">
    <location>
        <position position="161"/>
    </location>
    <ligand>
        <name>L-threonylcarbamoyladenylate</name>
        <dbReference type="ChEBI" id="CHEBI:73682"/>
    </ligand>
</feature>
<feature type="binding site" evidence="1">
    <location>
        <position position="174"/>
    </location>
    <ligand>
        <name>L-threonylcarbamoyladenylate</name>
        <dbReference type="ChEBI" id="CHEBI:73682"/>
    </ligand>
</feature>
<feature type="binding site" evidence="1">
    <location>
        <position position="178"/>
    </location>
    <ligand>
        <name>L-threonylcarbamoyladenylate</name>
        <dbReference type="ChEBI" id="CHEBI:73682"/>
    </ligand>
</feature>
<feature type="binding site" evidence="1">
    <location>
        <position position="258"/>
    </location>
    <ligand>
        <name>L-threonylcarbamoyladenylate</name>
        <dbReference type="ChEBI" id="CHEBI:73682"/>
    </ligand>
</feature>
<feature type="binding site" evidence="1">
    <location>
        <position position="286"/>
    </location>
    <ligand>
        <name>Fe cation</name>
        <dbReference type="ChEBI" id="CHEBI:24875"/>
    </ligand>
</feature>
<feature type="binding site" evidence="1">
    <location>
        <begin position="340"/>
        <end position="348"/>
    </location>
    <ligand>
        <name>ATP</name>
        <dbReference type="ChEBI" id="CHEBI:30616"/>
    </ligand>
</feature>
<feature type="binding site" evidence="1">
    <location>
        <position position="361"/>
    </location>
    <ligand>
        <name>ATP</name>
        <dbReference type="ChEBI" id="CHEBI:30616"/>
    </ligand>
</feature>
<gene>
    <name type="ordered locus">MTH_1425</name>
</gene>
<protein>
    <recommendedName>
        <fullName evidence="1">Probable bifunctional tRNA threonylcarbamoyladenosine biosynthesis protein</fullName>
    </recommendedName>
    <domain>
        <recommendedName>
            <fullName evidence="1">tRNA N6-adenosine threonylcarbamoyltransferase</fullName>
            <ecNumber evidence="1">2.3.1.234</ecNumber>
        </recommendedName>
        <alternativeName>
            <fullName>N6-L-threonylcarbamoyladenine synthase</fullName>
            <shortName>t(6)A synthase</shortName>
        </alternativeName>
        <alternativeName>
            <fullName evidence="1">t(6)A37 threonylcarbamoyladenosine biosynthesis protein Kae1</fullName>
        </alternativeName>
        <alternativeName>
            <fullName evidence="1">tRNA threonylcarbamoyladenosine biosynthesis protein Kae1</fullName>
        </alternativeName>
    </domain>
    <domain>
        <recommendedName>
            <fullName evidence="1">Serine/threonine-protein kinase Bud32</fullName>
            <ecNumber evidence="1">2.7.11.1</ecNumber>
        </recommendedName>
    </domain>
</protein>
<sequence length="534" mass="58298">MLCLGIEGTAEKTGVGIVDEAGNVLSLRGKPLIPEKGGIHPREAAEHHAKWIPRLIAEACRDAGVELGEIGLISFSRGPGLGPALRTVATAARTLALSLDVPIVGVNHCIGHIEIGRLTTGASDPVSLYVSGGNTQVIAFNEGRYRVFGETLDIAVGNMLDQFARESGLGHPGGPVIEQLALKASEYIELPYSVKGMDISFSGLLTAALRKMEAGASLEDLAYSIQETAFSMLVEVTERALAYTEKNQVLLCGGVAVNRRLRDMLREMCQEHHVEFHMPPPEYCGDNGAMIAWLGQLVYKYRGPDALEDTTVVQRYRTDEVDVPWMRESEAGIELPPDILAKGAEANIYRGQWIGRPCIIKERISKGYRIPEIDQKLRSSRTRREARLINQAKGAGVHTPVLFDVDPDGGVMVMEEVRGTPFRDAVEDTELCSRIGEAIGRLHHAGIIHGDLTGSNIIIRGGDVVFIDFGLGRFSDEIEDMGVDLLVLKKSLESTHYALAGECFSRVLEGYGKIIDADIQSKIREIESRGRYTD</sequence>